<accession>F6UF99</accession>
<accession>F6VNI4</accession>
<name>TM237_XENTR</name>
<evidence type="ECO:0000250" key="1"/>
<evidence type="ECO:0000255" key="2"/>
<evidence type="ECO:0000256" key="3">
    <source>
        <dbReference type="SAM" id="MobiDB-lite"/>
    </source>
</evidence>
<evidence type="ECO:0000305" key="4"/>
<dbReference type="EMBL" id="AAMC01059190">
    <property type="status" value="NOT_ANNOTATED_CDS"/>
    <property type="molecule type" value="Genomic_DNA"/>
</dbReference>
<dbReference type="EMBL" id="AAMC01059191">
    <property type="status" value="NOT_ANNOTATED_CDS"/>
    <property type="molecule type" value="Genomic_DNA"/>
</dbReference>
<dbReference type="EMBL" id="AAMC01059192">
    <property type="status" value="NOT_ANNOTATED_CDS"/>
    <property type="molecule type" value="Genomic_DNA"/>
</dbReference>
<dbReference type="FunCoup" id="F6UF99">
    <property type="interactions" value="617"/>
</dbReference>
<dbReference type="STRING" id="8364.ENSXETP00000027566"/>
<dbReference type="PaxDb" id="8364-ENSXETP00000010581"/>
<dbReference type="eggNOG" id="ENOG502QTW0">
    <property type="taxonomic scope" value="Eukaryota"/>
</dbReference>
<dbReference type="HOGENOM" id="CLU_061097_0_0_1"/>
<dbReference type="InParanoid" id="F6UF99"/>
<dbReference type="TreeFam" id="TF329703"/>
<dbReference type="Proteomes" id="UP000008143">
    <property type="component" value="Unplaced"/>
</dbReference>
<dbReference type="GO" id="GO:0035869">
    <property type="term" value="C:ciliary transition zone"/>
    <property type="evidence" value="ECO:0000250"/>
    <property type="project" value="UniProtKB"/>
</dbReference>
<dbReference type="GO" id="GO:0016020">
    <property type="term" value="C:membrane"/>
    <property type="evidence" value="ECO:0007669"/>
    <property type="project" value="UniProtKB-SubCell"/>
</dbReference>
<dbReference type="GO" id="GO:0060271">
    <property type="term" value="P:cilium assembly"/>
    <property type="evidence" value="ECO:0000250"/>
    <property type="project" value="UniProtKB"/>
</dbReference>
<dbReference type="GO" id="GO:0030111">
    <property type="term" value="P:regulation of Wnt signaling pathway"/>
    <property type="evidence" value="ECO:0000250"/>
    <property type="project" value="UniProtKB"/>
</dbReference>
<dbReference type="InterPro" id="IPR029409">
    <property type="entry name" value="TMEM237"/>
</dbReference>
<dbReference type="PANTHER" id="PTHR28388">
    <property type="entry name" value="TRANSMEMBRANE PROTEIN 237"/>
    <property type="match status" value="1"/>
</dbReference>
<dbReference type="PANTHER" id="PTHR28388:SF1">
    <property type="entry name" value="TRANSMEMBRANE PROTEIN 237"/>
    <property type="match status" value="1"/>
</dbReference>
<dbReference type="Pfam" id="PF15383">
    <property type="entry name" value="TMEM237"/>
    <property type="match status" value="1"/>
</dbReference>
<gene>
    <name type="primary">tmem237</name>
</gene>
<comment type="function">
    <text evidence="1">Component of the transition zone in primary cilia. Required for ciliogenesis (By similarity).</text>
</comment>
<comment type="subcellular location">
    <subcellularLocation>
        <location evidence="4">Membrane</location>
        <topology evidence="4">Multi-pass membrane protein</topology>
    </subcellularLocation>
    <subcellularLocation>
        <location evidence="1">Cell projection</location>
        <location evidence="1">Cilium</location>
    </subcellularLocation>
    <text evidence="1">Localizes to the transition zone.</text>
</comment>
<comment type="similarity">
    <text evidence="4">Belongs to the TMEM237 family.</text>
</comment>
<proteinExistence type="inferred from homology"/>
<organism>
    <name type="scientific">Xenopus tropicalis</name>
    <name type="common">Western clawed frog</name>
    <name type="synonym">Silurana tropicalis</name>
    <dbReference type="NCBI Taxonomy" id="8364"/>
    <lineage>
        <taxon>Eukaryota</taxon>
        <taxon>Metazoa</taxon>
        <taxon>Chordata</taxon>
        <taxon>Craniata</taxon>
        <taxon>Vertebrata</taxon>
        <taxon>Euteleostomi</taxon>
        <taxon>Amphibia</taxon>
        <taxon>Batrachia</taxon>
        <taxon>Anura</taxon>
        <taxon>Pipoidea</taxon>
        <taxon>Pipidae</taxon>
        <taxon>Xenopodinae</taxon>
        <taxon>Xenopus</taxon>
        <taxon>Silurana</taxon>
    </lineage>
</organism>
<keyword id="KW-0966">Cell projection</keyword>
<keyword id="KW-0969">Cilium</keyword>
<keyword id="KW-0970">Cilium biogenesis/degradation</keyword>
<keyword id="KW-0472">Membrane</keyword>
<keyword id="KW-1185">Reference proteome</keyword>
<keyword id="KW-0812">Transmembrane</keyword>
<keyword id="KW-1133">Transmembrane helix</keyword>
<sequence>MGKKQVAPPRALPPMPSLKDEIPLSRSKKKKSKSNNVPDDLLQNAGFNTSENKDPLSPERRKKKKKRLSIDAETSLTQHNPALPVVQNGKDTDNQAAEEGTTRKPRRRTKKTRSVGQEFPNELGVEDEDIIPDGHTKIPEQNPAFLASSLTSQPVGKFFVEKNRRFQAADRSEIIKTTEQTDVFLDVKPTWTSMDVSLTAHHIFRMVGLFCCGFLAGYAVWNIVVVYVLAGSQLTNLPNLLQTYKILAYPSQCFLYFLLVLSTITAFDRIDLERTADALRGLLKLDPAALASFFYFVALILALSQQMTSDRINFYTPPTENGSLWQANTEEQILQPWIVINLVVALLVGLAWLFLSCRPDIDHTEEAMFIPEGEDYPDMEKGTKIQG</sequence>
<feature type="chain" id="PRO_0000415834" description="Transmembrane protein 237">
    <location>
        <begin position="1"/>
        <end position="387"/>
    </location>
</feature>
<feature type="transmembrane region" description="Helical" evidence="2">
    <location>
        <begin position="209"/>
        <end position="229"/>
    </location>
</feature>
<feature type="transmembrane region" description="Helical" evidence="2">
    <location>
        <begin position="246"/>
        <end position="266"/>
    </location>
</feature>
<feature type="transmembrane region" description="Helical" evidence="2">
    <location>
        <begin position="282"/>
        <end position="302"/>
    </location>
</feature>
<feature type="transmembrane region" description="Helical" evidence="2">
    <location>
        <begin position="337"/>
        <end position="357"/>
    </location>
</feature>
<feature type="region of interest" description="Disordered" evidence="3">
    <location>
        <begin position="1"/>
        <end position="116"/>
    </location>
</feature>
<feature type="compositionally biased region" description="Basic residues" evidence="3">
    <location>
        <begin position="103"/>
        <end position="113"/>
    </location>
</feature>
<protein>
    <recommendedName>
        <fullName>Transmembrane protein 237</fullName>
    </recommendedName>
</protein>
<reference key="1">
    <citation type="journal article" date="2010" name="Science">
        <title>The genome of the Western clawed frog Xenopus tropicalis.</title>
        <authorList>
            <person name="Hellsten U."/>
            <person name="Harland R.M."/>
            <person name="Gilchrist M.J."/>
            <person name="Hendrix D."/>
            <person name="Jurka J."/>
            <person name="Kapitonov V."/>
            <person name="Ovcharenko I."/>
            <person name="Putnam N.H."/>
            <person name="Shu S."/>
            <person name="Taher L."/>
            <person name="Blitz I.L."/>
            <person name="Blumberg B."/>
            <person name="Dichmann D.S."/>
            <person name="Dubchak I."/>
            <person name="Amaya E."/>
            <person name="Detter J.C."/>
            <person name="Fletcher R."/>
            <person name="Gerhard D.S."/>
            <person name="Goodstein D."/>
            <person name="Graves T."/>
            <person name="Grigoriev I.V."/>
            <person name="Grimwood J."/>
            <person name="Kawashima T."/>
            <person name="Lindquist E."/>
            <person name="Lucas S.M."/>
            <person name="Mead P.E."/>
            <person name="Mitros T."/>
            <person name="Ogino H."/>
            <person name="Ohta Y."/>
            <person name="Poliakov A.V."/>
            <person name="Pollet N."/>
            <person name="Robert J."/>
            <person name="Salamov A."/>
            <person name="Sater A.K."/>
            <person name="Schmutz J."/>
            <person name="Terry A."/>
            <person name="Vize P.D."/>
            <person name="Warren W.C."/>
            <person name="Wells D."/>
            <person name="Wills A."/>
            <person name="Wilson R.K."/>
            <person name="Zimmerman L.B."/>
            <person name="Zorn A.M."/>
            <person name="Grainger R."/>
            <person name="Grammer T."/>
            <person name="Khokha M.K."/>
            <person name="Richardson P.M."/>
            <person name="Rokhsar D.S."/>
        </authorList>
    </citation>
    <scope>NUCLEOTIDE SEQUENCE [LARGE SCALE GENOMIC DNA]</scope>
</reference>